<evidence type="ECO:0000255" key="1">
    <source>
        <dbReference type="HAMAP-Rule" id="MF_00093"/>
    </source>
</evidence>
<comment type="function">
    <text evidence="1">Peptide chain release factor 1 directs the termination of translation in response to the peptide chain termination codons UAG and UAA.</text>
</comment>
<comment type="subcellular location">
    <subcellularLocation>
        <location evidence="1">Cytoplasm</location>
    </subcellularLocation>
</comment>
<comment type="PTM">
    <text evidence="1">Methylated by PrmC. Methylation increases the termination efficiency of RF1.</text>
</comment>
<comment type="similarity">
    <text evidence="1">Belongs to the prokaryotic/mitochondrial release factor family.</text>
</comment>
<keyword id="KW-0963">Cytoplasm</keyword>
<keyword id="KW-0488">Methylation</keyword>
<keyword id="KW-0648">Protein biosynthesis</keyword>
<dbReference type="EMBL" id="CP001095">
    <property type="protein sequence ID" value="ACJ51686.1"/>
    <property type="molecule type" value="Genomic_DNA"/>
</dbReference>
<dbReference type="EMBL" id="AP010889">
    <property type="protein sequence ID" value="BAJ68172.1"/>
    <property type="molecule type" value="Genomic_DNA"/>
</dbReference>
<dbReference type="RefSeq" id="WP_012576978.1">
    <property type="nucleotide sequence ID" value="NZ_JDTT01000014.1"/>
</dbReference>
<dbReference type="SMR" id="B7GP74"/>
<dbReference type="KEGG" id="bln:Blon_0575"/>
<dbReference type="KEGG" id="blon:BLIJ_0579"/>
<dbReference type="PATRIC" id="fig|391904.8.peg.578"/>
<dbReference type="HOGENOM" id="CLU_036856_0_1_11"/>
<dbReference type="Proteomes" id="UP000001360">
    <property type="component" value="Chromosome"/>
</dbReference>
<dbReference type="GO" id="GO:0005737">
    <property type="term" value="C:cytoplasm"/>
    <property type="evidence" value="ECO:0007669"/>
    <property type="project" value="UniProtKB-SubCell"/>
</dbReference>
<dbReference type="GO" id="GO:0016149">
    <property type="term" value="F:translation release factor activity, codon specific"/>
    <property type="evidence" value="ECO:0007669"/>
    <property type="project" value="UniProtKB-UniRule"/>
</dbReference>
<dbReference type="FunFam" id="3.30.160.20:FF:000004">
    <property type="entry name" value="Peptide chain release factor 1"/>
    <property type="match status" value="1"/>
</dbReference>
<dbReference type="Gene3D" id="3.30.160.20">
    <property type="match status" value="1"/>
</dbReference>
<dbReference type="Gene3D" id="3.30.70.1660">
    <property type="match status" value="1"/>
</dbReference>
<dbReference type="Gene3D" id="6.10.140.1950">
    <property type="match status" value="1"/>
</dbReference>
<dbReference type="HAMAP" id="MF_00093">
    <property type="entry name" value="Rel_fac_1"/>
    <property type="match status" value="1"/>
</dbReference>
<dbReference type="InterPro" id="IPR005139">
    <property type="entry name" value="PCRF"/>
</dbReference>
<dbReference type="InterPro" id="IPR000352">
    <property type="entry name" value="Pep_chain_release_fac_I"/>
</dbReference>
<dbReference type="InterPro" id="IPR045853">
    <property type="entry name" value="Pep_chain_release_fac_I_sf"/>
</dbReference>
<dbReference type="InterPro" id="IPR050057">
    <property type="entry name" value="Prokaryotic/Mito_RF"/>
</dbReference>
<dbReference type="InterPro" id="IPR004373">
    <property type="entry name" value="RF-1"/>
</dbReference>
<dbReference type="NCBIfam" id="TIGR00019">
    <property type="entry name" value="prfA"/>
    <property type="match status" value="1"/>
</dbReference>
<dbReference type="NCBIfam" id="NF001859">
    <property type="entry name" value="PRK00591.1"/>
    <property type="match status" value="1"/>
</dbReference>
<dbReference type="PANTHER" id="PTHR43804">
    <property type="entry name" value="LD18447P"/>
    <property type="match status" value="1"/>
</dbReference>
<dbReference type="PANTHER" id="PTHR43804:SF7">
    <property type="entry name" value="LD18447P"/>
    <property type="match status" value="1"/>
</dbReference>
<dbReference type="Pfam" id="PF03462">
    <property type="entry name" value="PCRF"/>
    <property type="match status" value="1"/>
</dbReference>
<dbReference type="Pfam" id="PF00472">
    <property type="entry name" value="RF-1"/>
    <property type="match status" value="1"/>
</dbReference>
<dbReference type="SMART" id="SM00937">
    <property type="entry name" value="PCRF"/>
    <property type="match status" value="1"/>
</dbReference>
<dbReference type="SUPFAM" id="SSF75620">
    <property type="entry name" value="Release factor"/>
    <property type="match status" value="1"/>
</dbReference>
<sequence>MADEQFPAAATALEEYQSIEEQMASPEVVSNPDKLRKLGRRHAELGAIVGAYKTWLQVKDDLAAAQEMAGEDADFAEEAKRLEAELPGVEEKLRTALIPRDPDDARDTIMEIKAGTGGEEAALFAGDLLRMYTRYAEKRGWSVNVQSENTTELGGVKDVQIAIRAKGTPAPEDGVWASMKYEGGVHRVQRIPVTESQGRIQTSAAGVIVFPEADEDDDEIEIDPKDLKIDIFMSSGPGGQSVNTTYSAVRMTHLPTGITVNMQDEKSQIQNRAAALRVLKSRLLAMKHEQEAAEAADMRHSQVRSLDRSERIRTYNFPENRIVDHRTNYKAYNLDAVLDGDLQAVIDSDIQADEADRLANQQ</sequence>
<feature type="chain" id="PRO_1000193471" description="Peptide chain release factor 1">
    <location>
        <begin position="1"/>
        <end position="362"/>
    </location>
</feature>
<feature type="modified residue" description="N5-methylglutamine" evidence="1">
    <location>
        <position position="240"/>
    </location>
</feature>
<proteinExistence type="inferred from homology"/>
<accession>B7GP74</accession>
<accession>E8MQ97</accession>
<organism>
    <name type="scientific">Bifidobacterium longum subsp. infantis (strain ATCC 15697 / DSM 20088 / JCM 1222 / NCTC 11817 / S12)</name>
    <dbReference type="NCBI Taxonomy" id="391904"/>
    <lineage>
        <taxon>Bacteria</taxon>
        <taxon>Bacillati</taxon>
        <taxon>Actinomycetota</taxon>
        <taxon>Actinomycetes</taxon>
        <taxon>Bifidobacteriales</taxon>
        <taxon>Bifidobacteriaceae</taxon>
        <taxon>Bifidobacterium</taxon>
    </lineage>
</organism>
<protein>
    <recommendedName>
        <fullName evidence="1">Peptide chain release factor 1</fullName>
        <shortName evidence="1">RF-1</shortName>
    </recommendedName>
</protein>
<gene>
    <name evidence="1" type="primary">prfA</name>
    <name type="ordered locus">Blon_0575</name>
    <name type="ordered locus">BLIJ_0579</name>
</gene>
<name>RF1_BIFLS</name>
<reference key="1">
    <citation type="journal article" date="2008" name="Proc. Natl. Acad. Sci. U.S.A.">
        <title>The genome sequence of Bifidobacterium longum subsp. infantis reveals adaptations for milk utilization within the infant microbiome.</title>
        <authorList>
            <person name="Sela D.A."/>
            <person name="Chapman J."/>
            <person name="Adeuya A."/>
            <person name="Kim J.H."/>
            <person name="Chen F."/>
            <person name="Whitehead T.R."/>
            <person name="Lapidus A."/>
            <person name="Rokhsar D.S."/>
            <person name="Lebrilla C.B."/>
            <person name="German J.B."/>
            <person name="Price N.P."/>
            <person name="Richardson P.M."/>
            <person name="Mills D.A."/>
        </authorList>
    </citation>
    <scope>NUCLEOTIDE SEQUENCE [LARGE SCALE GENOMIC DNA]</scope>
    <source>
        <strain>ATCC 15697 / DSM 20088 / JCM 1222 / NCTC 11817 / S12</strain>
    </source>
</reference>
<reference key="2">
    <citation type="journal article" date="2011" name="Nature">
        <title>Bifidobacteria can protect from enteropathogenic infection through production of acetate.</title>
        <authorList>
            <person name="Fukuda S."/>
            <person name="Toh H."/>
            <person name="Hase K."/>
            <person name="Oshima K."/>
            <person name="Nakanishi Y."/>
            <person name="Yoshimura K."/>
            <person name="Tobe T."/>
            <person name="Clarke J.M."/>
            <person name="Topping D.L."/>
            <person name="Suzuki T."/>
            <person name="Taylor T.D."/>
            <person name="Itoh K."/>
            <person name="Kikuchi J."/>
            <person name="Morita H."/>
            <person name="Hattori M."/>
            <person name="Ohno H."/>
        </authorList>
    </citation>
    <scope>NUCLEOTIDE SEQUENCE [LARGE SCALE GENOMIC DNA]</scope>
    <source>
        <strain>ATCC 15697 / DSM 20088 / JCM 1222 / NCTC 11817 / S12</strain>
    </source>
</reference>